<gene>
    <name evidence="1" type="primary">hisC</name>
    <name type="ordered locus">Ecok1_19290</name>
    <name type="ORF">APECO1_1118</name>
</gene>
<sequence>MSTVTITDLARENVRNLTPYQSARRLGGNGDVWLNANEYPTAVEFQLTQQTLNRYPECQPKVVIENYAQYAGVKPEQVLVSRGADEGIELLIRAFCEQGKDAILYCPPTYGMYSVSAETIGVECRTVPTLDNWQLDLQGISDKLDGVKVVYVCSPNNPTGQLINPQDFRTLLELTRGKAIVVADEAYIEFCPQASLAGWLAEYPHLAILRTLSKAFALAGLRCGFTLANEEVINLLMKVIAPYPLSTPVADIAAQALSPQGIVAMRERVAQIITEREYLIAALKEIPCVEQVFDSETNYILARFKASSAVFKSLWDQGIILRDQNKQPSLSGCLRITVGTREESQCVIDALRAEQV</sequence>
<reference key="1">
    <citation type="journal article" date="2007" name="J. Bacteriol.">
        <title>The genome sequence of avian pathogenic Escherichia coli strain O1:K1:H7 shares strong similarities with human extraintestinal pathogenic E. coli genomes.</title>
        <authorList>
            <person name="Johnson T.J."/>
            <person name="Kariyawasam S."/>
            <person name="Wannemuehler Y."/>
            <person name="Mangiamele P."/>
            <person name="Johnson S.J."/>
            <person name="Doetkott C."/>
            <person name="Skyberg J.A."/>
            <person name="Lynne A.M."/>
            <person name="Johnson J.R."/>
            <person name="Nolan L.K."/>
        </authorList>
    </citation>
    <scope>NUCLEOTIDE SEQUENCE [LARGE SCALE GENOMIC DNA]</scope>
</reference>
<evidence type="ECO:0000255" key="1">
    <source>
        <dbReference type="HAMAP-Rule" id="MF_01023"/>
    </source>
</evidence>
<dbReference type="EC" id="2.6.1.9" evidence="1"/>
<dbReference type="EMBL" id="CP000468">
    <property type="protein sequence ID" value="ABJ01423.1"/>
    <property type="molecule type" value="Genomic_DNA"/>
</dbReference>
<dbReference type="RefSeq" id="WP_000108997.1">
    <property type="nucleotide sequence ID" value="NZ_CADILS010000063.1"/>
</dbReference>
<dbReference type="SMR" id="A1ACN3"/>
<dbReference type="KEGG" id="ecv:APECO1_1118"/>
<dbReference type="HOGENOM" id="CLU_017584_3_1_6"/>
<dbReference type="UniPathway" id="UPA00031">
    <property type="reaction ID" value="UER00012"/>
</dbReference>
<dbReference type="Proteomes" id="UP000008216">
    <property type="component" value="Chromosome"/>
</dbReference>
<dbReference type="GO" id="GO:0004400">
    <property type="term" value="F:histidinol-phosphate transaminase activity"/>
    <property type="evidence" value="ECO:0007669"/>
    <property type="project" value="UniProtKB-UniRule"/>
</dbReference>
<dbReference type="GO" id="GO:0030170">
    <property type="term" value="F:pyridoxal phosphate binding"/>
    <property type="evidence" value="ECO:0007669"/>
    <property type="project" value="InterPro"/>
</dbReference>
<dbReference type="GO" id="GO:0000105">
    <property type="term" value="P:L-histidine biosynthetic process"/>
    <property type="evidence" value="ECO:0007669"/>
    <property type="project" value="UniProtKB-UniRule"/>
</dbReference>
<dbReference type="CDD" id="cd00609">
    <property type="entry name" value="AAT_like"/>
    <property type="match status" value="1"/>
</dbReference>
<dbReference type="FunFam" id="3.40.640.10:FF:000032">
    <property type="entry name" value="Histidinol-phosphate aminotransferase"/>
    <property type="match status" value="1"/>
</dbReference>
<dbReference type="FunFam" id="3.90.1150.10:FF:000042">
    <property type="entry name" value="Histidinol-phosphate aminotransferase"/>
    <property type="match status" value="1"/>
</dbReference>
<dbReference type="Gene3D" id="3.90.1150.10">
    <property type="entry name" value="Aspartate Aminotransferase, domain 1"/>
    <property type="match status" value="1"/>
</dbReference>
<dbReference type="Gene3D" id="3.40.640.10">
    <property type="entry name" value="Type I PLP-dependent aspartate aminotransferase-like (Major domain)"/>
    <property type="match status" value="1"/>
</dbReference>
<dbReference type="HAMAP" id="MF_01023">
    <property type="entry name" value="HisC_aminotrans_2"/>
    <property type="match status" value="1"/>
</dbReference>
<dbReference type="InterPro" id="IPR001917">
    <property type="entry name" value="Aminotrans_II_pyridoxalP_BS"/>
</dbReference>
<dbReference type="InterPro" id="IPR004839">
    <property type="entry name" value="Aminotransferase_I/II_large"/>
</dbReference>
<dbReference type="InterPro" id="IPR005861">
    <property type="entry name" value="HisP_aminotrans"/>
</dbReference>
<dbReference type="InterPro" id="IPR015424">
    <property type="entry name" value="PyrdxlP-dep_Trfase"/>
</dbReference>
<dbReference type="InterPro" id="IPR015421">
    <property type="entry name" value="PyrdxlP-dep_Trfase_major"/>
</dbReference>
<dbReference type="InterPro" id="IPR015422">
    <property type="entry name" value="PyrdxlP-dep_Trfase_small"/>
</dbReference>
<dbReference type="NCBIfam" id="TIGR01141">
    <property type="entry name" value="hisC"/>
    <property type="match status" value="1"/>
</dbReference>
<dbReference type="PANTHER" id="PTHR42885:SF2">
    <property type="entry name" value="HISTIDINOL-PHOSPHATE AMINOTRANSFERASE"/>
    <property type="match status" value="1"/>
</dbReference>
<dbReference type="PANTHER" id="PTHR42885">
    <property type="entry name" value="HISTIDINOL-PHOSPHATE AMINOTRANSFERASE-RELATED"/>
    <property type="match status" value="1"/>
</dbReference>
<dbReference type="Pfam" id="PF00155">
    <property type="entry name" value="Aminotran_1_2"/>
    <property type="match status" value="1"/>
</dbReference>
<dbReference type="SUPFAM" id="SSF53383">
    <property type="entry name" value="PLP-dependent transferases"/>
    <property type="match status" value="1"/>
</dbReference>
<dbReference type="PROSITE" id="PS00599">
    <property type="entry name" value="AA_TRANSFER_CLASS_2"/>
    <property type="match status" value="1"/>
</dbReference>
<keyword id="KW-0028">Amino-acid biosynthesis</keyword>
<keyword id="KW-0032">Aminotransferase</keyword>
<keyword id="KW-0368">Histidine biosynthesis</keyword>
<keyword id="KW-0663">Pyridoxal phosphate</keyword>
<keyword id="KW-1185">Reference proteome</keyword>
<keyword id="KW-0808">Transferase</keyword>
<comment type="catalytic activity">
    <reaction evidence="1">
        <text>L-histidinol phosphate + 2-oxoglutarate = 3-(imidazol-4-yl)-2-oxopropyl phosphate + L-glutamate</text>
        <dbReference type="Rhea" id="RHEA:23744"/>
        <dbReference type="ChEBI" id="CHEBI:16810"/>
        <dbReference type="ChEBI" id="CHEBI:29985"/>
        <dbReference type="ChEBI" id="CHEBI:57766"/>
        <dbReference type="ChEBI" id="CHEBI:57980"/>
        <dbReference type="EC" id="2.6.1.9"/>
    </reaction>
</comment>
<comment type="cofactor">
    <cofactor evidence="1">
        <name>pyridoxal 5'-phosphate</name>
        <dbReference type="ChEBI" id="CHEBI:597326"/>
    </cofactor>
</comment>
<comment type="pathway">
    <text evidence="1">Amino-acid biosynthesis; L-histidine biosynthesis; L-histidine from 5-phospho-alpha-D-ribose 1-diphosphate: step 7/9.</text>
</comment>
<comment type="subunit">
    <text evidence="1">Homodimer.</text>
</comment>
<comment type="similarity">
    <text evidence="1">Belongs to the class-II pyridoxal-phosphate-dependent aminotransferase family. Histidinol-phosphate aminotransferase subfamily.</text>
</comment>
<organism>
    <name type="scientific">Escherichia coli O1:K1 / APEC</name>
    <dbReference type="NCBI Taxonomy" id="405955"/>
    <lineage>
        <taxon>Bacteria</taxon>
        <taxon>Pseudomonadati</taxon>
        <taxon>Pseudomonadota</taxon>
        <taxon>Gammaproteobacteria</taxon>
        <taxon>Enterobacterales</taxon>
        <taxon>Enterobacteriaceae</taxon>
        <taxon>Escherichia</taxon>
    </lineage>
</organism>
<feature type="chain" id="PRO_1000063475" description="Histidinol-phosphate aminotransferase">
    <location>
        <begin position="1"/>
        <end position="356"/>
    </location>
</feature>
<feature type="modified residue" description="N6-(pyridoxal phosphate)lysine" evidence="1">
    <location>
        <position position="214"/>
    </location>
</feature>
<accession>A1ACN3</accession>
<proteinExistence type="inferred from homology"/>
<name>HIS8_ECOK1</name>
<protein>
    <recommendedName>
        <fullName evidence="1">Histidinol-phosphate aminotransferase</fullName>
        <ecNumber evidence="1">2.6.1.9</ecNumber>
    </recommendedName>
    <alternativeName>
        <fullName evidence="1">Imidazole acetol-phosphate transaminase</fullName>
    </alternativeName>
</protein>